<accession>A4XXF3</accession>
<keyword id="KW-0456">Lyase</keyword>
<keyword id="KW-0663">Pyridoxal phosphate</keyword>
<gene>
    <name evidence="1" type="primary">dsdA</name>
    <name type="ordered locus">Pmen_3266</name>
</gene>
<proteinExistence type="inferred from homology"/>
<dbReference type="EC" id="4.3.1.18" evidence="1"/>
<dbReference type="EMBL" id="CP000680">
    <property type="protein sequence ID" value="ABP86019.1"/>
    <property type="molecule type" value="Genomic_DNA"/>
</dbReference>
<dbReference type="SMR" id="A4XXF3"/>
<dbReference type="STRING" id="399739.Pmen_3266"/>
<dbReference type="KEGG" id="pmy:Pmen_3266"/>
<dbReference type="PATRIC" id="fig|399739.8.peg.3313"/>
<dbReference type="eggNOG" id="COG3048">
    <property type="taxonomic scope" value="Bacteria"/>
</dbReference>
<dbReference type="HOGENOM" id="CLU_035707_0_0_6"/>
<dbReference type="OrthoDB" id="9780546at2"/>
<dbReference type="GO" id="GO:0008721">
    <property type="term" value="F:D-serine ammonia-lyase activity"/>
    <property type="evidence" value="ECO:0007669"/>
    <property type="project" value="UniProtKB-EC"/>
</dbReference>
<dbReference type="GO" id="GO:0016836">
    <property type="term" value="F:hydro-lyase activity"/>
    <property type="evidence" value="ECO:0007669"/>
    <property type="project" value="UniProtKB-UniRule"/>
</dbReference>
<dbReference type="GO" id="GO:0030170">
    <property type="term" value="F:pyridoxal phosphate binding"/>
    <property type="evidence" value="ECO:0007669"/>
    <property type="project" value="InterPro"/>
</dbReference>
<dbReference type="GO" id="GO:0036088">
    <property type="term" value="P:D-serine catabolic process"/>
    <property type="evidence" value="ECO:0007669"/>
    <property type="project" value="TreeGrafter"/>
</dbReference>
<dbReference type="GO" id="GO:0009097">
    <property type="term" value="P:isoleucine biosynthetic process"/>
    <property type="evidence" value="ECO:0007669"/>
    <property type="project" value="TreeGrafter"/>
</dbReference>
<dbReference type="Gene3D" id="3.40.50.1100">
    <property type="match status" value="2"/>
</dbReference>
<dbReference type="HAMAP" id="MF_01030">
    <property type="entry name" value="D_Ser_dehydrat"/>
    <property type="match status" value="1"/>
</dbReference>
<dbReference type="InterPro" id="IPR011780">
    <property type="entry name" value="D_Ser_am_lyase"/>
</dbReference>
<dbReference type="InterPro" id="IPR050147">
    <property type="entry name" value="Ser/Thr_Dehydratase"/>
</dbReference>
<dbReference type="InterPro" id="IPR000634">
    <property type="entry name" value="Ser/Thr_deHydtase_PyrdxlP-BS"/>
</dbReference>
<dbReference type="InterPro" id="IPR001926">
    <property type="entry name" value="TrpB-like_PALP"/>
</dbReference>
<dbReference type="InterPro" id="IPR036052">
    <property type="entry name" value="TrpB-like_PALP_sf"/>
</dbReference>
<dbReference type="NCBIfam" id="TIGR02035">
    <property type="entry name" value="D_Ser_am_lyase"/>
    <property type="match status" value="1"/>
</dbReference>
<dbReference type="NCBIfam" id="NF002823">
    <property type="entry name" value="PRK02991.1"/>
    <property type="match status" value="1"/>
</dbReference>
<dbReference type="PANTHER" id="PTHR48078:SF9">
    <property type="entry name" value="D-SERINE DEHYDRATASE"/>
    <property type="match status" value="1"/>
</dbReference>
<dbReference type="PANTHER" id="PTHR48078">
    <property type="entry name" value="THREONINE DEHYDRATASE, MITOCHONDRIAL-RELATED"/>
    <property type="match status" value="1"/>
</dbReference>
<dbReference type="Pfam" id="PF00291">
    <property type="entry name" value="PALP"/>
    <property type="match status" value="1"/>
</dbReference>
<dbReference type="SUPFAM" id="SSF53686">
    <property type="entry name" value="Tryptophan synthase beta subunit-like PLP-dependent enzymes"/>
    <property type="match status" value="1"/>
</dbReference>
<dbReference type="PROSITE" id="PS00165">
    <property type="entry name" value="DEHYDRATASE_SER_THR"/>
    <property type="match status" value="1"/>
</dbReference>
<reference key="1">
    <citation type="submission" date="2007-04" db="EMBL/GenBank/DDBJ databases">
        <title>Complete sequence of Pseudomonas mendocina ymp.</title>
        <authorList>
            <consortium name="US DOE Joint Genome Institute"/>
            <person name="Copeland A."/>
            <person name="Lucas S."/>
            <person name="Lapidus A."/>
            <person name="Barry K."/>
            <person name="Glavina del Rio T."/>
            <person name="Dalin E."/>
            <person name="Tice H."/>
            <person name="Pitluck S."/>
            <person name="Kiss H."/>
            <person name="Brettin T."/>
            <person name="Detter J.C."/>
            <person name="Bruce D."/>
            <person name="Han C."/>
            <person name="Schmutz J."/>
            <person name="Larimer F."/>
            <person name="Land M."/>
            <person name="Hauser L."/>
            <person name="Kyrpides N."/>
            <person name="Mikhailova N."/>
            <person name="Hersman L."/>
            <person name="Dubois J."/>
            <person name="Maurice P."/>
            <person name="Richardson P."/>
        </authorList>
    </citation>
    <scope>NUCLEOTIDE SEQUENCE [LARGE SCALE GENOMIC DNA]</scope>
    <source>
        <strain>ymp</strain>
    </source>
</reference>
<organism>
    <name type="scientific">Ectopseudomonas mendocina (strain ymp)</name>
    <name type="common">Pseudomonas mendocina</name>
    <dbReference type="NCBI Taxonomy" id="399739"/>
    <lineage>
        <taxon>Bacteria</taxon>
        <taxon>Pseudomonadati</taxon>
        <taxon>Pseudomonadota</taxon>
        <taxon>Gammaproteobacteria</taxon>
        <taxon>Pseudomonadales</taxon>
        <taxon>Pseudomonadaceae</taxon>
        <taxon>Ectopseudomonas</taxon>
    </lineage>
</organism>
<feature type="chain" id="PRO_1000063714" description="Probable D-serine dehydratase">
    <location>
        <begin position="1"/>
        <end position="446"/>
    </location>
</feature>
<feature type="modified residue" description="N6-(pyridoxal phosphate)lysine" evidence="1">
    <location>
        <position position="118"/>
    </location>
</feature>
<sequence>MILGQPLAQWRAQYPLLDELIALRETSWFNPAVAPAAEALGDVGLSAADVADARARLERFAPYLARAFPQTAASGGIIESDILPLPQMQALLREEAEGEIGALWLKRDSHLPISGSIKARGGIYEVLKHAEDLALAAGLLGLDDDYACLDSDAMRAFFGGYQVAVGSTGNLGLSIGIISARLGFQATVHMSADARQWKKDKLRAHGVTVVEYASDYSVAVEQGRRQAEADPRCHFVDDENSRHLFLGYAVAGERLRQQLAAANVVVDAEHPLFVYLPCGVGGGPGGVAFGLKLAFGDAVHCLFAEPTHSPCMLLGVHTGRHEELAVQDFGIDNRTAADGLAVGRPSGFVGRAMQRLIDGYYTVSDEQLFRYLALVEQTEGQRLEPSALAGMPGVLRVLGERQGYRQRMGLTPQRMARATHLVWATGGSMVPEAEMDSYLARGRQLL</sequence>
<evidence type="ECO:0000255" key="1">
    <source>
        <dbReference type="HAMAP-Rule" id="MF_01030"/>
    </source>
</evidence>
<name>SDHD_ECTM1</name>
<comment type="catalytic activity">
    <reaction evidence="1">
        <text>D-serine = pyruvate + NH4(+)</text>
        <dbReference type="Rhea" id="RHEA:13977"/>
        <dbReference type="ChEBI" id="CHEBI:15361"/>
        <dbReference type="ChEBI" id="CHEBI:28938"/>
        <dbReference type="ChEBI" id="CHEBI:35247"/>
        <dbReference type="EC" id="4.3.1.18"/>
    </reaction>
</comment>
<comment type="cofactor">
    <cofactor evidence="1">
        <name>pyridoxal 5'-phosphate</name>
        <dbReference type="ChEBI" id="CHEBI:597326"/>
    </cofactor>
</comment>
<comment type="similarity">
    <text evidence="1">Belongs to the serine/threonine dehydratase family. DsdA subfamily.</text>
</comment>
<protein>
    <recommendedName>
        <fullName evidence="1">Probable D-serine dehydratase</fullName>
        <ecNumber evidence="1">4.3.1.18</ecNumber>
    </recommendedName>
    <alternativeName>
        <fullName evidence="1">D-serine deaminase</fullName>
        <shortName evidence="1">DSD</shortName>
    </alternativeName>
</protein>